<sequence length="357" mass="40471">FPYQGSSIMLESGKVNDYEVVYPRKVTALPKGAVQQKYEDTMQYEFKVNGEPVVLHLEKNKGLFSKDYSEIHYSPDGRRITTHPLVEGHCYYRGHIRNDADSTASISACNGLKGHFKIQGETYFIESLKLSDSEAHAVFKYENVEKEDEAHKMCGVTQNWESYEPIKKASQLIVSTEFQRYMEIVIVVDHSMYTKYKGDSDKIKAWVYEMINTISESYRYLYIDIIVSALEMWSEKDLINVETSAENTLKSFGEWRAKDLIHRISHDNAQLLTATDFDGPTIGLAYVASMCDPKRSVGVVQDHSSVNHLVAITLAHEIAHNLGVHHDEGSCSCGSGYTCIMSPVINSEVIKYFLDSK</sequence>
<proteinExistence type="evidence at transcript level"/>
<reference key="1">
    <citation type="journal article" date="2000" name="Eur. J. Biochem.">
        <title>Purification, cloning and sequence analyses for pro-metalloprotease-disintegrin variants from Deinagkistrodon acutus venom and subclassification of the small venom metalloproteases.</title>
        <authorList>
            <person name="Tsai I.-H."/>
            <person name="Wang Y.-M."/>
            <person name="Chiang T.-Y."/>
            <person name="Chen Y.-L."/>
            <person name="Huang R.-J."/>
        </authorList>
    </citation>
    <scope>NUCLEOTIDE SEQUENCE [MRNA]</scope>
    <source>
        <tissue>Venom gland</tissue>
    </source>
</reference>
<dbReference type="EC" id="3.4.24.-"/>
<dbReference type="EMBL" id="AF098308">
    <property type="protein sequence ID" value="AAF61183.1"/>
    <property type="molecule type" value="mRNA"/>
</dbReference>
<dbReference type="SMR" id="Q9IAY4"/>
<dbReference type="MEROPS" id="M12.131"/>
<dbReference type="GO" id="GO:0005576">
    <property type="term" value="C:extracellular region"/>
    <property type="evidence" value="ECO:0007669"/>
    <property type="project" value="UniProtKB-SubCell"/>
</dbReference>
<dbReference type="GO" id="GO:0005886">
    <property type="term" value="C:plasma membrane"/>
    <property type="evidence" value="ECO:0007669"/>
    <property type="project" value="TreeGrafter"/>
</dbReference>
<dbReference type="GO" id="GO:0046872">
    <property type="term" value="F:metal ion binding"/>
    <property type="evidence" value="ECO:0007669"/>
    <property type="project" value="UniProtKB-KW"/>
</dbReference>
<dbReference type="GO" id="GO:0004222">
    <property type="term" value="F:metalloendopeptidase activity"/>
    <property type="evidence" value="ECO:0007669"/>
    <property type="project" value="InterPro"/>
</dbReference>
<dbReference type="GO" id="GO:0090729">
    <property type="term" value="F:toxin activity"/>
    <property type="evidence" value="ECO:0007669"/>
    <property type="project" value="UniProtKB-KW"/>
</dbReference>
<dbReference type="GO" id="GO:0006508">
    <property type="term" value="P:proteolysis"/>
    <property type="evidence" value="ECO:0007669"/>
    <property type="project" value="UniProtKB-KW"/>
</dbReference>
<dbReference type="CDD" id="cd04269">
    <property type="entry name" value="ZnMc_adamalysin_II_like"/>
    <property type="match status" value="1"/>
</dbReference>
<dbReference type="FunFam" id="3.40.390.10:FF:000002">
    <property type="entry name" value="Disintegrin and metalloproteinase domain-containing protein 22"/>
    <property type="match status" value="1"/>
</dbReference>
<dbReference type="Gene3D" id="3.40.390.10">
    <property type="entry name" value="Collagenase (Catalytic Domain)"/>
    <property type="match status" value="1"/>
</dbReference>
<dbReference type="InterPro" id="IPR024079">
    <property type="entry name" value="MetalloPept_cat_dom_sf"/>
</dbReference>
<dbReference type="InterPro" id="IPR001590">
    <property type="entry name" value="Peptidase_M12B"/>
</dbReference>
<dbReference type="InterPro" id="IPR002870">
    <property type="entry name" value="Peptidase_M12B_N"/>
</dbReference>
<dbReference type="InterPro" id="IPR034027">
    <property type="entry name" value="Reprolysin_adamalysin"/>
</dbReference>
<dbReference type="PANTHER" id="PTHR11905">
    <property type="entry name" value="ADAM A DISINTEGRIN AND METALLOPROTEASE DOMAIN"/>
    <property type="match status" value="1"/>
</dbReference>
<dbReference type="PANTHER" id="PTHR11905:SF32">
    <property type="entry name" value="DISINTEGRIN AND METALLOPROTEINASE DOMAIN-CONTAINING PROTEIN 28"/>
    <property type="match status" value="1"/>
</dbReference>
<dbReference type="Pfam" id="PF01562">
    <property type="entry name" value="Pep_M12B_propep"/>
    <property type="match status" value="1"/>
</dbReference>
<dbReference type="Pfam" id="PF01421">
    <property type="entry name" value="Reprolysin"/>
    <property type="match status" value="1"/>
</dbReference>
<dbReference type="SUPFAM" id="SSF55486">
    <property type="entry name" value="Metalloproteases ('zincins'), catalytic domain"/>
    <property type="match status" value="1"/>
</dbReference>
<dbReference type="PROSITE" id="PS50215">
    <property type="entry name" value="ADAM_MEPRO"/>
    <property type="match status" value="1"/>
</dbReference>
<dbReference type="PROSITE" id="PS00142">
    <property type="entry name" value="ZINC_PROTEASE"/>
    <property type="match status" value="1"/>
</dbReference>
<accession>Q9IAY4</accession>
<evidence type="ECO:0000250" key="1"/>
<evidence type="ECO:0000255" key="2"/>
<evidence type="ECO:0000255" key="3">
    <source>
        <dbReference type="PROSITE-ProRule" id="PRU00276"/>
    </source>
</evidence>
<evidence type="ECO:0000255" key="4">
    <source>
        <dbReference type="PROSITE-ProRule" id="PRU10095"/>
    </source>
</evidence>
<evidence type="ECO:0000305" key="5"/>
<protein>
    <recommendedName>
        <fullName>Snake venom metalloproteinase H4</fullName>
        <shortName>SVMP</shortName>
        <ecNumber>3.4.24.-</ecNumber>
    </recommendedName>
</protein>
<name>VM1H4_DEIAC</name>
<comment type="function">
    <text evidence="1">Snake venom metalloproteinase that impairs hemostasis in the envenomed animal.</text>
</comment>
<comment type="cofactor">
    <cofactor evidence="1">
        <name>Zn(2+)</name>
        <dbReference type="ChEBI" id="CHEBI:29105"/>
    </cofactor>
    <text evidence="1">Binds 1 zinc ion per subunit.</text>
</comment>
<comment type="subunit">
    <text evidence="1">Monomer.</text>
</comment>
<comment type="subcellular location">
    <subcellularLocation>
        <location evidence="1">Secreted</location>
    </subcellularLocation>
</comment>
<comment type="tissue specificity">
    <text>Expressed by the venom gland.</text>
</comment>
<comment type="similarity">
    <text evidence="5">Belongs to the venom metalloproteinase (M12B) family. P-I subfamily.</text>
</comment>
<feature type="signal peptide" evidence="2">
    <location>
        <begin position="1" status="less than"/>
        <end position="6"/>
    </location>
</feature>
<feature type="propeptide" id="PRO_0000322622" evidence="1">
    <location>
        <begin position="7"/>
        <end position="176"/>
    </location>
</feature>
<feature type="chain" id="PRO_5000055234" description="Snake venom metalloproteinase H4">
    <location>
        <begin position="177"/>
        <end position="357"/>
    </location>
</feature>
<feature type="domain" description="Peptidase M12B" evidence="3">
    <location>
        <begin position="180"/>
        <end position="357"/>
    </location>
</feature>
<feature type="active site" evidence="3 4">
    <location>
        <position position="317"/>
    </location>
</feature>
<feature type="binding site" evidence="1">
    <location>
        <position position="316"/>
    </location>
    <ligand>
        <name>Zn(2+)</name>
        <dbReference type="ChEBI" id="CHEBI:29105"/>
        <note>catalytic</note>
    </ligand>
</feature>
<feature type="binding site" evidence="1">
    <location>
        <position position="320"/>
    </location>
    <ligand>
        <name>Zn(2+)</name>
        <dbReference type="ChEBI" id="CHEBI:29105"/>
        <note>catalytic</note>
    </ligand>
</feature>
<feature type="binding site" evidence="1">
    <location>
        <position position="326"/>
    </location>
    <ligand>
        <name>Zn(2+)</name>
        <dbReference type="ChEBI" id="CHEBI:29105"/>
        <note>catalytic</note>
    </ligand>
</feature>
<feature type="disulfide bond" evidence="3">
    <location>
        <begin position="333"/>
        <end position="339"/>
    </location>
</feature>
<feature type="non-terminal residue">
    <location>
        <position position="1"/>
    </location>
</feature>
<organism>
    <name type="scientific">Deinagkistrodon acutus</name>
    <name type="common">Hundred-pace snake</name>
    <name type="synonym">Agkistrodon acutus</name>
    <dbReference type="NCBI Taxonomy" id="36307"/>
    <lineage>
        <taxon>Eukaryota</taxon>
        <taxon>Metazoa</taxon>
        <taxon>Chordata</taxon>
        <taxon>Craniata</taxon>
        <taxon>Vertebrata</taxon>
        <taxon>Euteleostomi</taxon>
        <taxon>Lepidosauria</taxon>
        <taxon>Squamata</taxon>
        <taxon>Bifurcata</taxon>
        <taxon>Unidentata</taxon>
        <taxon>Episquamata</taxon>
        <taxon>Toxicofera</taxon>
        <taxon>Serpentes</taxon>
        <taxon>Colubroidea</taxon>
        <taxon>Viperidae</taxon>
        <taxon>Crotalinae</taxon>
        <taxon>Deinagkistrodon</taxon>
    </lineage>
</organism>
<keyword id="KW-1015">Disulfide bond</keyword>
<keyword id="KW-1199">Hemostasis impairing toxin</keyword>
<keyword id="KW-0378">Hydrolase</keyword>
<keyword id="KW-0479">Metal-binding</keyword>
<keyword id="KW-0482">Metalloprotease</keyword>
<keyword id="KW-0645">Protease</keyword>
<keyword id="KW-0964">Secreted</keyword>
<keyword id="KW-0732">Signal</keyword>
<keyword id="KW-0800">Toxin</keyword>
<keyword id="KW-0862">Zinc</keyword>
<keyword id="KW-0865">Zymogen</keyword>